<sequence>MKIFGKWLLVTLLICSMPVKAALDIVITEGIDAARPIAVIPFVWQGTGPMPSQISDVVMSDLARSGTFSPADELSLPQRGISTLAQFNASAWMTQPAEAVVMGSIKPYGGDKYLVSFELIDLVKAQLQPDSQSAQDLVIDSRETIITAAQFRQYGHRISDVVYEKLTGIRGAFLTRIAYVVVNHGEKSPYKLMISDYDGYNEQMLLRSPEPLMSPSWSPDGQRLAYVSFENRKAEIYVQNIYTQQRTNVTSFDGINGAPVFSPDGKKLAVTLSKDGQPEVYVVDIATKAIKRVTNHYAIDTEPSWFPDGKSLLITSERGGRPQLYRVFLDSGKISRLTFEGEWNLGGSIAPDGRSIIFVNRTNGKFNIARMDLETRFMQVLTSTRLDESPSVAPNGTMVIYGTTYQGKQVLAAVSMDGRFKARLPVGQGEVKSPSWSPFL</sequence>
<feature type="signal peptide" evidence="1">
    <location>
        <begin position="1"/>
        <end position="21"/>
    </location>
</feature>
<feature type="chain" id="PRO_1000082943" description="Tol-Pal system protein TolB" evidence="1">
    <location>
        <begin position="22"/>
        <end position="440"/>
    </location>
</feature>
<name>TOLB_SHEHH</name>
<comment type="function">
    <text evidence="1">Part of the Tol-Pal system, which plays a role in outer membrane invagination during cell division and is important for maintaining outer membrane integrity.</text>
</comment>
<comment type="subunit">
    <text evidence="1">The Tol-Pal system is composed of five core proteins: the inner membrane proteins TolA, TolQ and TolR, the periplasmic protein TolB and the outer membrane protein Pal. They form a network linking the inner and outer membranes and the peptidoglycan layer.</text>
</comment>
<comment type="subcellular location">
    <subcellularLocation>
        <location evidence="1">Periplasm</location>
    </subcellularLocation>
</comment>
<comment type="similarity">
    <text evidence="1">Belongs to the TolB family.</text>
</comment>
<protein>
    <recommendedName>
        <fullName evidence="1">Tol-Pal system protein TolB</fullName>
    </recommendedName>
</protein>
<gene>
    <name evidence="1" type="primary">tolB</name>
    <name type="ordered locus">Shal_1691</name>
</gene>
<accession>B0TPX8</accession>
<keyword id="KW-0131">Cell cycle</keyword>
<keyword id="KW-0132">Cell division</keyword>
<keyword id="KW-0574">Periplasm</keyword>
<keyword id="KW-0732">Signal</keyword>
<reference key="1">
    <citation type="submission" date="2008-01" db="EMBL/GenBank/DDBJ databases">
        <title>Complete sequence of Shewanella halifaxensis HAW-EB4.</title>
        <authorList>
            <consortium name="US DOE Joint Genome Institute"/>
            <person name="Copeland A."/>
            <person name="Lucas S."/>
            <person name="Lapidus A."/>
            <person name="Glavina del Rio T."/>
            <person name="Dalin E."/>
            <person name="Tice H."/>
            <person name="Bruce D."/>
            <person name="Goodwin L."/>
            <person name="Pitluck S."/>
            <person name="Sims D."/>
            <person name="Brettin T."/>
            <person name="Detter J.C."/>
            <person name="Han C."/>
            <person name="Kuske C.R."/>
            <person name="Schmutz J."/>
            <person name="Larimer F."/>
            <person name="Land M."/>
            <person name="Hauser L."/>
            <person name="Kyrpides N."/>
            <person name="Kim E."/>
            <person name="Zhao J.-S."/>
            <person name="Richardson P."/>
        </authorList>
    </citation>
    <scope>NUCLEOTIDE SEQUENCE [LARGE SCALE GENOMIC DNA]</scope>
    <source>
        <strain>HAW-EB4</strain>
    </source>
</reference>
<dbReference type="EMBL" id="CP000931">
    <property type="protein sequence ID" value="ABZ76257.1"/>
    <property type="molecule type" value="Genomic_DNA"/>
</dbReference>
<dbReference type="RefSeq" id="WP_012276794.1">
    <property type="nucleotide sequence ID" value="NC_010334.1"/>
</dbReference>
<dbReference type="SMR" id="B0TPX8"/>
<dbReference type="STRING" id="458817.Shal_1691"/>
<dbReference type="KEGG" id="shl:Shal_1691"/>
<dbReference type="eggNOG" id="COG0823">
    <property type="taxonomic scope" value="Bacteria"/>
</dbReference>
<dbReference type="HOGENOM" id="CLU_047123_0_0_6"/>
<dbReference type="OrthoDB" id="9802240at2"/>
<dbReference type="Proteomes" id="UP000001317">
    <property type="component" value="Chromosome"/>
</dbReference>
<dbReference type="GO" id="GO:0042597">
    <property type="term" value="C:periplasmic space"/>
    <property type="evidence" value="ECO:0007669"/>
    <property type="project" value="UniProtKB-SubCell"/>
</dbReference>
<dbReference type="GO" id="GO:0051301">
    <property type="term" value="P:cell division"/>
    <property type="evidence" value="ECO:0007669"/>
    <property type="project" value="UniProtKB-UniRule"/>
</dbReference>
<dbReference type="GO" id="GO:0017038">
    <property type="term" value="P:protein import"/>
    <property type="evidence" value="ECO:0007669"/>
    <property type="project" value="InterPro"/>
</dbReference>
<dbReference type="Gene3D" id="2.120.10.30">
    <property type="entry name" value="TolB, C-terminal domain"/>
    <property type="match status" value="1"/>
</dbReference>
<dbReference type="Gene3D" id="3.40.50.10070">
    <property type="entry name" value="TolB, N-terminal domain"/>
    <property type="match status" value="1"/>
</dbReference>
<dbReference type="HAMAP" id="MF_00671">
    <property type="entry name" value="TolB"/>
    <property type="match status" value="1"/>
</dbReference>
<dbReference type="InterPro" id="IPR011042">
    <property type="entry name" value="6-blade_b-propeller_TolB-like"/>
</dbReference>
<dbReference type="InterPro" id="IPR011659">
    <property type="entry name" value="PD40"/>
</dbReference>
<dbReference type="InterPro" id="IPR014167">
    <property type="entry name" value="Tol-Pal_TolB"/>
</dbReference>
<dbReference type="InterPro" id="IPR007195">
    <property type="entry name" value="TolB_N"/>
</dbReference>
<dbReference type="NCBIfam" id="TIGR02800">
    <property type="entry name" value="propeller_TolB"/>
    <property type="match status" value="1"/>
</dbReference>
<dbReference type="PANTHER" id="PTHR36842:SF1">
    <property type="entry name" value="PROTEIN TOLB"/>
    <property type="match status" value="1"/>
</dbReference>
<dbReference type="PANTHER" id="PTHR36842">
    <property type="entry name" value="PROTEIN TOLB HOMOLOG"/>
    <property type="match status" value="1"/>
</dbReference>
<dbReference type="Pfam" id="PF07676">
    <property type="entry name" value="PD40"/>
    <property type="match status" value="4"/>
</dbReference>
<dbReference type="Pfam" id="PF04052">
    <property type="entry name" value="TolB_N"/>
    <property type="match status" value="1"/>
</dbReference>
<dbReference type="SUPFAM" id="SSF52964">
    <property type="entry name" value="TolB, N-terminal domain"/>
    <property type="match status" value="1"/>
</dbReference>
<dbReference type="SUPFAM" id="SSF69304">
    <property type="entry name" value="Tricorn protease N-terminal domain"/>
    <property type="match status" value="1"/>
</dbReference>
<proteinExistence type="inferred from homology"/>
<organism>
    <name type="scientific">Shewanella halifaxensis (strain HAW-EB4)</name>
    <dbReference type="NCBI Taxonomy" id="458817"/>
    <lineage>
        <taxon>Bacteria</taxon>
        <taxon>Pseudomonadati</taxon>
        <taxon>Pseudomonadota</taxon>
        <taxon>Gammaproteobacteria</taxon>
        <taxon>Alteromonadales</taxon>
        <taxon>Shewanellaceae</taxon>
        <taxon>Shewanella</taxon>
    </lineage>
</organism>
<evidence type="ECO:0000255" key="1">
    <source>
        <dbReference type="HAMAP-Rule" id="MF_00671"/>
    </source>
</evidence>